<reference key="1">
    <citation type="journal article" date="2006" name="Proc. Natl. Acad. Sci. U.S.A.">
        <title>Identification of genes subject to positive selection in uropathogenic strains of Escherichia coli: a comparative genomics approach.</title>
        <authorList>
            <person name="Chen S.L."/>
            <person name="Hung C.-S."/>
            <person name="Xu J."/>
            <person name="Reigstad C.S."/>
            <person name="Magrini V."/>
            <person name="Sabo A."/>
            <person name="Blasiar D."/>
            <person name="Bieri T."/>
            <person name="Meyer R.R."/>
            <person name="Ozersky P."/>
            <person name="Armstrong J.R."/>
            <person name="Fulton R.S."/>
            <person name="Latreille J.P."/>
            <person name="Spieth J."/>
            <person name="Hooton T.M."/>
            <person name="Mardis E.R."/>
            <person name="Hultgren S.J."/>
            <person name="Gordon J.I."/>
        </authorList>
    </citation>
    <scope>NUCLEOTIDE SEQUENCE [LARGE SCALE GENOMIC DNA]</scope>
    <source>
        <strain>UTI89 / UPEC</strain>
    </source>
</reference>
<organism>
    <name type="scientific">Escherichia coli (strain UTI89 / UPEC)</name>
    <dbReference type="NCBI Taxonomy" id="364106"/>
    <lineage>
        <taxon>Bacteria</taxon>
        <taxon>Pseudomonadati</taxon>
        <taxon>Pseudomonadota</taxon>
        <taxon>Gammaproteobacteria</taxon>
        <taxon>Enterobacterales</taxon>
        <taxon>Enterobacteriaceae</taxon>
        <taxon>Escherichia</taxon>
    </lineage>
</organism>
<sequence>MNTFSQVWVFSDTPSRLPELMNGAQALANQINTFVLNDADGTQAIQLGANHVWKLSGKPDERMIEDYAGVMADTIRQHGADGLVLLPNTRRGKLLAAKLGYRLNAAVSNDASAVSVQDGKATVKHMVYGGLAIGEERIATPYAVLTISSGTFDAAQPDASRTGETHTVEWQAPAVAITRTATQARQSNSVDLDKARLVVSVGRGIGSKENIALAEQLCKAIGAELACSRPVAENEKWMEHERYVGISNLMLKPELYLAVGISGQIQHMVGANASQTIFAINKDKNAPIFQYADYGIVGDAVKILPALTVALAR</sequence>
<feature type="chain" id="PRO_0000300963" description="Protein FixB">
    <location>
        <begin position="1"/>
        <end position="313"/>
    </location>
</feature>
<feature type="binding site" evidence="1">
    <location>
        <begin position="255"/>
        <end position="283"/>
    </location>
    <ligand>
        <name>FAD</name>
        <dbReference type="ChEBI" id="CHEBI:57692"/>
    </ligand>
</feature>
<name>FIXB_ECOUT</name>
<accession>Q1RGF6</accession>
<protein>
    <recommendedName>
        <fullName evidence="1">Protein FixB</fullName>
    </recommendedName>
</protein>
<keyword id="KW-0249">Electron transport</keyword>
<keyword id="KW-0274">FAD</keyword>
<keyword id="KW-0285">Flavoprotein</keyword>
<keyword id="KW-0813">Transport</keyword>
<proteinExistence type="inferred from homology"/>
<dbReference type="EMBL" id="CP000243">
    <property type="protein sequence ID" value="ABE05558.1"/>
    <property type="molecule type" value="Genomic_DNA"/>
</dbReference>
<dbReference type="RefSeq" id="WP_001091524.1">
    <property type="nucleotide sequence ID" value="NZ_CP064825.1"/>
</dbReference>
<dbReference type="SMR" id="Q1RGF6"/>
<dbReference type="KEGG" id="eci:UTI89_C0048"/>
<dbReference type="HOGENOM" id="CLU_034178_0_1_6"/>
<dbReference type="UniPathway" id="UPA00117"/>
<dbReference type="Proteomes" id="UP000001952">
    <property type="component" value="Chromosome"/>
</dbReference>
<dbReference type="GO" id="GO:0009055">
    <property type="term" value="F:electron transfer activity"/>
    <property type="evidence" value="ECO:0007669"/>
    <property type="project" value="InterPro"/>
</dbReference>
<dbReference type="GO" id="GO:0050660">
    <property type="term" value="F:flavin adenine dinucleotide binding"/>
    <property type="evidence" value="ECO:0007669"/>
    <property type="project" value="InterPro"/>
</dbReference>
<dbReference type="GO" id="GO:0009437">
    <property type="term" value="P:carnitine metabolic process"/>
    <property type="evidence" value="ECO:0007669"/>
    <property type="project" value="UniProtKB-UniRule"/>
</dbReference>
<dbReference type="GO" id="GO:0033539">
    <property type="term" value="P:fatty acid beta-oxidation using acyl-CoA dehydrogenase"/>
    <property type="evidence" value="ECO:0007669"/>
    <property type="project" value="TreeGrafter"/>
</dbReference>
<dbReference type="FunFam" id="3.40.50.1220:FF:000004">
    <property type="entry name" value="Electron transfer flavoprotein"/>
    <property type="match status" value="1"/>
</dbReference>
<dbReference type="FunFam" id="3.40.50.620:FF:000067">
    <property type="entry name" value="Protein FixB"/>
    <property type="match status" value="1"/>
</dbReference>
<dbReference type="Gene3D" id="3.40.50.620">
    <property type="entry name" value="HUPs"/>
    <property type="match status" value="1"/>
</dbReference>
<dbReference type="Gene3D" id="3.40.50.1220">
    <property type="entry name" value="TPP-binding domain"/>
    <property type="match status" value="1"/>
</dbReference>
<dbReference type="HAMAP" id="MF_01056">
    <property type="entry name" value="FixB"/>
    <property type="match status" value="1"/>
</dbReference>
<dbReference type="InterPro" id="IPR029035">
    <property type="entry name" value="DHS-like_NAD/FAD-binding_dom"/>
</dbReference>
<dbReference type="InterPro" id="IPR014730">
    <property type="entry name" value="ETF_a/b_N"/>
</dbReference>
<dbReference type="InterPro" id="IPR001308">
    <property type="entry name" value="ETF_a/FixB"/>
</dbReference>
<dbReference type="InterPro" id="IPR014731">
    <property type="entry name" value="ETF_asu_C"/>
</dbReference>
<dbReference type="InterPro" id="IPR018206">
    <property type="entry name" value="ETF_asu_C_CS"/>
</dbReference>
<dbReference type="InterPro" id="IPR023461">
    <property type="entry name" value="FixB"/>
</dbReference>
<dbReference type="InterPro" id="IPR014729">
    <property type="entry name" value="Rossmann-like_a/b/a_fold"/>
</dbReference>
<dbReference type="NCBIfam" id="NF002889">
    <property type="entry name" value="PRK03363.1"/>
    <property type="match status" value="1"/>
</dbReference>
<dbReference type="PANTHER" id="PTHR43153">
    <property type="entry name" value="ELECTRON TRANSFER FLAVOPROTEIN ALPHA"/>
    <property type="match status" value="1"/>
</dbReference>
<dbReference type="PANTHER" id="PTHR43153:SF5">
    <property type="entry name" value="PROTEIN FIXB-RELATED"/>
    <property type="match status" value="1"/>
</dbReference>
<dbReference type="Pfam" id="PF01012">
    <property type="entry name" value="ETF"/>
    <property type="match status" value="1"/>
</dbReference>
<dbReference type="Pfam" id="PF00766">
    <property type="entry name" value="ETF_alpha"/>
    <property type="match status" value="1"/>
</dbReference>
<dbReference type="PIRSF" id="PIRSF000089">
    <property type="entry name" value="Electra_flavoP_a"/>
    <property type="match status" value="1"/>
</dbReference>
<dbReference type="SMART" id="SM00893">
    <property type="entry name" value="ETF"/>
    <property type="match status" value="1"/>
</dbReference>
<dbReference type="SUPFAM" id="SSF52402">
    <property type="entry name" value="Adenine nucleotide alpha hydrolases-like"/>
    <property type="match status" value="1"/>
</dbReference>
<dbReference type="SUPFAM" id="SSF52467">
    <property type="entry name" value="DHS-like NAD/FAD-binding domain"/>
    <property type="match status" value="1"/>
</dbReference>
<dbReference type="PROSITE" id="PS00696">
    <property type="entry name" value="ETF_ALPHA"/>
    <property type="match status" value="1"/>
</dbReference>
<comment type="function">
    <text evidence="1">Required for anaerobic carnitine reduction. May bring reductant to CaiA.</text>
</comment>
<comment type="pathway">
    <text evidence="1">Amine and polyamine metabolism; carnitine metabolism.</text>
</comment>
<comment type="subunit">
    <text evidence="1">Heterodimer of FixA and FixB.</text>
</comment>
<comment type="similarity">
    <text evidence="1">Belongs to the ETF alpha-subunit/FixB family.</text>
</comment>
<gene>
    <name evidence="1" type="primary">fixB</name>
    <name type="ordered locus">UTI89_C0048</name>
</gene>
<evidence type="ECO:0000255" key="1">
    <source>
        <dbReference type="HAMAP-Rule" id="MF_01056"/>
    </source>
</evidence>